<comment type="function">
    <text evidence="1">Component of the sulfite reductase complex that catalyzes the 6-electron reduction of sulfite to sulfide. This is one of several activities required for the biosynthesis of L-cysteine from sulfate.</text>
</comment>
<comment type="catalytic activity">
    <reaction evidence="1">
        <text>hydrogen sulfide + 3 NADP(+) + 3 H2O = sulfite + 3 NADPH + 4 H(+)</text>
        <dbReference type="Rhea" id="RHEA:13801"/>
        <dbReference type="ChEBI" id="CHEBI:15377"/>
        <dbReference type="ChEBI" id="CHEBI:15378"/>
        <dbReference type="ChEBI" id="CHEBI:17359"/>
        <dbReference type="ChEBI" id="CHEBI:29919"/>
        <dbReference type="ChEBI" id="CHEBI:57783"/>
        <dbReference type="ChEBI" id="CHEBI:58349"/>
        <dbReference type="EC" id="1.8.1.2"/>
    </reaction>
</comment>
<comment type="cofactor">
    <cofactor evidence="1">
        <name>siroheme</name>
        <dbReference type="ChEBI" id="CHEBI:60052"/>
    </cofactor>
    <text evidence="1">Binds 1 siroheme per subunit.</text>
</comment>
<comment type="cofactor">
    <cofactor evidence="1">
        <name>[4Fe-4S] cluster</name>
        <dbReference type="ChEBI" id="CHEBI:49883"/>
    </cofactor>
    <text evidence="1">Binds 1 [4Fe-4S] cluster per subunit.</text>
</comment>
<comment type="pathway">
    <text evidence="1">Sulfur metabolism; hydrogen sulfide biosynthesis; hydrogen sulfide from sulfite (NADPH route): step 1/1.</text>
</comment>
<comment type="subunit">
    <text evidence="1">Alpha(8)-beta(8). The alpha component is a flavoprotein, the beta component is a hemoprotein.</text>
</comment>
<comment type="similarity">
    <text evidence="1">Belongs to the nitrite and sulfite reductase 4Fe-4S domain family.</text>
</comment>
<accession>Q8EB00</accession>
<protein>
    <recommendedName>
        <fullName evidence="1">Sulfite reductase [NADPH] hemoprotein beta-component</fullName>
        <shortName evidence="1">SiR-HP</shortName>
        <shortName evidence="1">SiRHP</shortName>
        <ecNumber evidence="1">1.8.1.2</ecNumber>
    </recommendedName>
</protein>
<keyword id="KW-0004">4Fe-4S</keyword>
<keyword id="KW-0028">Amino-acid biosynthesis</keyword>
<keyword id="KW-0198">Cysteine biosynthesis</keyword>
<keyword id="KW-0349">Heme</keyword>
<keyword id="KW-0408">Iron</keyword>
<keyword id="KW-0411">Iron-sulfur</keyword>
<keyword id="KW-0479">Metal-binding</keyword>
<keyword id="KW-0521">NADP</keyword>
<keyword id="KW-0560">Oxidoreductase</keyword>
<keyword id="KW-1185">Reference proteome</keyword>
<dbReference type="EC" id="1.8.1.2" evidence="1"/>
<dbReference type="EMBL" id="AE014299">
    <property type="protein sequence ID" value="AAN56720.1"/>
    <property type="molecule type" value="Genomic_DNA"/>
</dbReference>
<dbReference type="RefSeq" id="NP_719276.1">
    <property type="nucleotide sequence ID" value="NC_004347.2"/>
</dbReference>
<dbReference type="RefSeq" id="WP_011073520.1">
    <property type="nucleotide sequence ID" value="NC_004347.2"/>
</dbReference>
<dbReference type="SMR" id="Q8EB00"/>
<dbReference type="STRING" id="211586.SO_3737"/>
<dbReference type="PaxDb" id="211586-SO_3737"/>
<dbReference type="KEGG" id="son:SO_3737"/>
<dbReference type="PATRIC" id="fig|211586.12.peg.3620"/>
<dbReference type="eggNOG" id="COG0155">
    <property type="taxonomic scope" value="Bacteria"/>
</dbReference>
<dbReference type="HOGENOM" id="CLU_001975_3_2_6"/>
<dbReference type="OrthoDB" id="3189055at2"/>
<dbReference type="PhylomeDB" id="Q8EB00"/>
<dbReference type="BioCyc" id="SONE211586:G1GMP-3472-MONOMER"/>
<dbReference type="UniPathway" id="UPA00140">
    <property type="reaction ID" value="UER00207"/>
</dbReference>
<dbReference type="Proteomes" id="UP000008186">
    <property type="component" value="Chromosome"/>
</dbReference>
<dbReference type="GO" id="GO:0009337">
    <property type="term" value="C:sulfite reductase complex (NADPH)"/>
    <property type="evidence" value="ECO:0000318"/>
    <property type="project" value="GO_Central"/>
</dbReference>
<dbReference type="GO" id="GO:0051539">
    <property type="term" value="F:4 iron, 4 sulfur cluster binding"/>
    <property type="evidence" value="ECO:0007669"/>
    <property type="project" value="UniProtKB-KW"/>
</dbReference>
<dbReference type="GO" id="GO:0020037">
    <property type="term" value="F:heme binding"/>
    <property type="evidence" value="ECO:0007669"/>
    <property type="project" value="InterPro"/>
</dbReference>
<dbReference type="GO" id="GO:0046872">
    <property type="term" value="F:metal ion binding"/>
    <property type="evidence" value="ECO:0007669"/>
    <property type="project" value="UniProtKB-KW"/>
</dbReference>
<dbReference type="GO" id="GO:0050661">
    <property type="term" value="F:NADP binding"/>
    <property type="evidence" value="ECO:0007669"/>
    <property type="project" value="InterPro"/>
</dbReference>
<dbReference type="GO" id="GO:0004783">
    <property type="term" value="F:sulfite reductase (NADPH) activity"/>
    <property type="evidence" value="ECO:0007669"/>
    <property type="project" value="UniProtKB-UniRule"/>
</dbReference>
<dbReference type="GO" id="GO:0019344">
    <property type="term" value="P:cysteine biosynthetic process"/>
    <property type="evidence" value="ECO:0007669"/>
    <property type="project" value="UniProtKB-KW"/>
</dbReference>
<dbReference type="GO" id="GO:0070814">
    <property type="term" value="P:hydrogen sulfide biosynthetic process"/>
    <property type="evidence" value="ECO:0007669"/>
    <property type="project" value="UniProtKB-UniRule"/>
</dbReference>
<dbReference type="GO" id="GO:0000103">
    <property type="term" value="P:sulfate assimilation"/>
    <property type="evidence" value="ECO:0000318"/>
    <property type="project" value="GO_Central"/>
</dbReference>
<dbReference type="FunFam" id="3.30.413.10:FF:000003">
    <property type="entry name" value="Sulfite reductase [NADPH] hemoprotein beta-component"/>
    <property type="match status" value="1"/>
</dbReference>
<dbReference type="FunFam" id="3.30.413.10:FF:000004">
    <property type="entry name" value="Sulfite reductase [NADPH] hemoprotein beta-component"/>
    <property type="match status" value="1"/>
</dbReference>
<dbReference type="Gene3D" id="3.30.413.10">
    <property type="entry name" value="Sulfite Reductase Hemoprotein, domain 1"/>
    <property type="match status" value="2"/>
</dbReference>
<dbReference type="HAMAP" id="MF_01540">
    <property type="entry name" value="CysI"/>
    <property type="match status" value="1"/>
</dbReference>
<dbReference type="InterPro" id="IPR011786">
    <property type="entry name" value="CysI"/>
</dbReference>
<dbReference type="InterPro" id="IPR005117">
    <property type="entry name" value="NiRdtase/SiRdtase_haem-b_fer"/>
</dbReference>
<dbReference type="InterPro" id="IPR036136">
    <property type="entry name" value="Nit/Sulf_reduc_fer-like_dom_sf"/>
</dbReference>
<dbReference type="InterPro" id="IPR006067">
    <property type="entry name" value="NO2/SO3_Rdtase_4Fe4S_dom"/>
</dbReference>
<dbReference type="InterPro" id="IPR045169">
    <property type="entry name" value="NO2/SO3_Rdtase_4Fe4S_prot"/>
</dbReference>
<dbReference type="InterPro" id="IPR045854">
    <property type="entry name" value="NO2/SO3_Rdtase_4Fe4S_sf"/>
</dbReference>
<dbReference type="InterPro" id="IPR006066">
    <property type="entry name" value="NO2/SO3_Rdtase_FeS/sirohaem_BS"/>
</dbReference>
<dbReference type="NCBIfam" id="TIGR02041">
    <property type="entry name" value="CysI"/>
    <property type="match status" value="1"/>
</dbReference>
<dbReference type="NCBIfam" id="NF010029">
    <property type="entry name" value="PRK13504.1"/>
    <property type="match status" value="1"/>
</dbReference>
<dbReference type="PANTHER" id="PTHR11493:SF47">
    <property type="entry name" value="SULFITE REDUCTASE [NADPH] SUBUNIT BETA"/>
    <property type="match status" value="1"/>
</dbReference>
<dbReference type="PANTHER" id="PTHR11493">
    <property type="entry name" value="SULFITE REDUCTASE [NADPH] SUBUNIT BETA-RELATED"/>
    <property type="match status" value="1"/>
</dbReference>
<dbReference type="Pfam" id="PF01077">
    <property type="entry name" value="NIR_SIR"/>
    <property type="match status" value="1"/>
</dbReference>
<dbReference type="Pfam" id="PF03460">
    <property type="entry name" value="NIR_SIR_ferr"/>
    <property type="match status" value="2"/>
</dbReference>
<dbReference type="PRINTS" id="PR00397">
    <property type="entry name" value="SIROHAEM"/>
</dbReference>
<dbReference type="SUPFAM" id="SSF56014">
    <property type="entry name" value="Nitrite and sulphite reductase 4Fe-4S domain-like"/>
    <property type="match status" value="2"/>
</dbReference>
<dbReference type="SUPFAM" id="SSF55124">
    <property type="entry name" value="Nitrite/Sulfite reductase N-terminal domain-like"/>
    <property type="match status" value="2"/>
</dbReference>
<dbReference type="PROSITE" id="PS00365">
    <property type="entry name" value="NIR_SIR"/>
    <property type="match status" value="1"/>
</dbReference>
<evidence type="ECO:0000255" key="1">
    <source>
        <dbReference type="HAMAP-Rule" id="MF_01540"/>
    </source>
</evidence>
<reference key="1">
    <citation type="journal article" date="2002" name="Nat. Biotechnol.">
        <title>Genome sequence of the dissimilatory metal ion-reducing bacterium Shewanella oneidensis.</title>
        <authorList>
            <person name="Heidelberg J.F."/>
            <person name="Paulsen I.T."/>
            <person name="Nelson K.E."/>
            <person name="Gaidos E.J."/>
            <person name="Nelson W.C."/>
            <person name="Read T.D."/>
            <person name="Eisen J.A."/>
            <person name="Seshadri R."/>
            <person name="Ward N.L."/>
            <person name="Methe B.A."/>
            <person name="Clayton R.A."/>
            <person name="Meyer T."/>
            <person name="Tsapin A."/>
            <person name="Scott J."/>
            <person name="Beanan M.J."/>
            <person name="Brinkac L.M."/>
            <person name="Daugherty S.C."/>
            <person name="DeBoy R.T."/>
            <person name="Dodson R.J."/>
            <person name="Durkin A.S."/>
            <person name="Haft D.H."/>
            <person name="Kolonay J.F."/>
            <person name="Madupu R."/>
            <person name="Peterson J.D."/>
            <person name="Umayam L.A."/>
            <person name="White O."/>
            <person name="Wolf A.M."/>
            <person name="Vamathevan J.J."/>
            <person name="Weidman J.F."/>
            <person name="Impraim M."/>
            <person name="Lee K."/>
            <person name="Berry K.J."/>
            <person name="Lee C."/>
            <person name="Mueller J."/>
            <person name="Khouri H.M."/>
            <person name="Gill J."/>
            <person name="Utterback T.R."/>
            <person name="McDonald L.A."/>
            <person name="Feldblyum T.V."/>
            <person name="Smith H.O."/>
            <person name="Venter J.C."/>
            <person name="Nealson K.H."/>
            <person name="Fraser C.M."/>
        </authorList>
    </citation>
    <scope>NUCLEOTIDE SEQUENCE [LARGE SCALE GENOMIC DNA]</scope>
    <source>
        <strain>ATCC 700550 / JCM 31522 / CIP 106686 / LMG 19005 / NCIMB 14063 / MR-1</strain>
    </source>
</reference>
<sequence>MSEQKLALNEYLKTDSDYLRGTIKEGLDSSVTGSFSDGDQQLIKFHGFYQQDDRDLRNERKEQKLEPLYSFMLRARVPGGVCTPKQWLGVDEIASTLTSSNSIRLTTRQTFQYHGIPKRNLKTIIQGLDREALDSIAACGDVNRNVMCNPNPVESKLHAQAYEVAKKLSDHLLPHTRAYAEIWLDEEKLLTTEDETVEPVYGKTYLPRKFKMAVAVPPDNDVDVYTNDLGFIAVAENGELVGFNLTAGGGMGSTHGEVETFPRLADDFGFIKTEDVMKFAEAVMTVQRDWGNRTNRKRSRLKYTIVDHGYEKFKAEVEVRAGVKFEPKRDVVIGDRGDRYGWVEGVDGKWHLTLFIESGRIKDMPGKSLQTGMREIAKIHKGDFRMTSNQNMIIAGVAPEDKATIEGLARKRGLLGQVLTQTRGHSIACVALPTCPLAMAEAERYFPEFIDHIDALQAKNGISDQAIVVRMTGCPNGCARPFAAEIGLVGKAPGRYNLYLGANFEGTRLNKMYRENIQEAEILAELDALFARYAIERNAGETFGNFTVRVGVVKAVIDAAKDFHG</sequence>
<organism>
    <name type="scientific">Shewanella oneidensis (strain ATCC 700550 / JCM 31522 / CIP 106686 / LMG 19005 / NCIMB 14063 / MR-1)</name>
    <dbReference type="NCBI Taxonomy" id="211586"/>
    <lineage>
        <taxon>Bacteria</taxon>
        <taxon>Pseudomonadati</taxon>
        <taxon>Pseudomonadota</taxon>
        <taxon>Gammaproteobacteria</taxon>
        <taxon>Alteromonadales</taxon>
        <taxon>Shewanellaceae</taxon>
        <taxon>Shewanella</taxon>
    </lineage>
</organism>
<feature type="chain" id="PRO_0000199909" description="Sulfite reductase [NADPH] hemoprotein beta-component">
    <location>
        <begin position="1"/>
        <end position="565"/>
    </location>
</feature>
<feature type="binding site" evidence="1">
    <location>
        <position position="429"/>
    </location>
    <ligand>
        <name>[4Fe-4S] cluster</name>
        <dbReference type="ChEBI" id="CHEBI:49883"/>
    </ligand>
</feature>
<feature type="binding site" evidence="1">
    <location>
        <position position="435"/>
    </location>
    <ligand>
        <name>[4Fe-4S] cluster</name>
        <dbReference type="ChEBI" id="CHEBI:49883"/>
    </ligand>
</feature>
<feature type="binding site" evidence="1">
    <location>
        <position position="474"/>
    </location>
    <ligand>
        <name>[4Fe-4S] cluster</name>
        <dbReference type="ChEBI" id="CHEBI:49883"/>
    </ligand>
</feature>
<feature type="binding site" evidence="1">
    <location>
        <position position="478"/>
    </location>
    <ligand>
        <name>[4Fe-4S] cluster</name>
        <dbReference type="ChEBI" id="CHEBI:49883"/>
    </ligand>
</feature>
<feature type="binding site" description="axial binding residue" evidence="1">
    <location>
        <position position="478"/>
    </location>
    <ligand>
        <name>siroheme</name>
        <dbReference type="ChEBI" id="CHEBI:60052"/>
    </ligand>
    <ligandPart>
        <name>Fe</name>
        <dbReference type="ChEBI" id="CHEBI:18248"/>
    </ligandPart>
</feature>
<name>CYSI_SHEON</name>
<proteinExistence type="inferred from homology"/>
<gene>
    <name evidence="1" type="primary">cysI</name>
    <name type="ordered locus">SO_3737</name>
</gene>